<gene>
    <name evidence="1" type="primary">rplI</name>
    <name type="ordered locus">YPO3536</name>
    <name type="ordered locus">y0647</name>
    <name type="ordered locus">YP_0545</name>
</gene>
<name>RL9_YERPE</name>
<keyword id="KW-1185">Reference proteome</keyword>
<keyword id="KW-0687">Ribonucleoprotein</keyword>
<keyword id="KW-0689">Ribosomal protein</keyword>
<keyword id="KW-0694">RNA-binding</keyword>
<keyword id="KW-0699">rRNA-binding</keyword>
<comment type="function">
    <text evidence="1">Binds to the 23S rRNA.</text>
</comment>
<comment type="similarity">
    <text evidence="1">Belongs to the bacterial ribosomal protein bL9 family.</text>
</comment>
<reference key="1">
    <citation type="journal article" date="2001" name="Nature">
        <title>Genome sequence of Yersinia pestis, the causative agent of plague.</title>
        <authorList>
            <person name="Parkhill J."/>
            <person name="Wren B.W."/>
            <person name="Thomson N.R."/>
            <person name="Titball R.W."/>
            <person name="Holden M.T.G."/>
            <person name="Prentice M.B."/>
            <person name="Sebaihia M."/>
            <person name="James K.D."/>
            <person name="Churcher C.M."/>
            <person name="Mungall K.L."/>
            <person name="Baker S."/>
            <person name="Basham D."/>
            <person name="Bentley S.D."/>
            <person name="Brooks K."/>
            <person name="Cerdeno-Tarraga A.-M."/>
            <person name="Chillingworth T."/>
            <person name="Cronin A."/>
            <person name="Davies R.M."/>
            <person name="Davis P."/>
            <person name="Dougan G."/>
            <person name="Feltwell T."/>
            <person name="Hamlin N."/>
            <person name="Holroyd S."/>
            <person name="Jagels K."/>
            <person name="Karlyshev A.V."/>
            <person name="Leather S."/>
            <person name="Moule S."/>
            <person name="Oyston P.C.F."/>
            <person name="Quail M.A."/>
            <person name="Rutherford K.M."/>
            <person name="Simmonds M."/>
            <person name="Skelton J."/>
            <person name="Stevens K."/>
            <person name="Whitehead S."/>
            <person name="Barrell B.G."/>
        </authorList>
    </citation>
    <scope>NUCLEOTIDE SEQUENCE [LARGE SCALE GENOMIC DNA]</scope>
    <source>
        <strain>CO-92 / Biovar Orientalis</strain>
    </source>
</reference>
<reference key="2">
    <citation type="journal article" date="2002" name="J. Bacteriol.">
        <title>Genome sequence of Yersinia pestis KIM.</title>
        <authorList>
            <person name="Deng W."/>
            <person name="Burland V."/>
            <person name="Plunkett G. III"/>
            <person name="Boutin A."/>
            <person name="Mayhew G.F."/>
            <person name="Liss P."/>
            <person name="Perna N.T."/>
            <person name="Rose D.J."/>
            <person name="Mau B."/>
            <person name="Zhou S."/>
            <person name="Schwartz D.C."/>
            <person name="Fetherston J.D."/>
            <person name="Lindler L.E."/>
            <person name="Brubaker R.R."/>
            <person name="Plano G.V."/>
            <person name="Straley S.C."/>
            <person name="McDonough K.A."/>
            <person name="Nilles M.L."/>
            <person name="Matson J.S."/>
            <person name="Blattner F.R."/>
            <person name="Perry R.D."/>
        </authorList>
    </citation>
    <scope>NUCLEOTIDE SEQUENCE [LARGE SCALE GENOMIC DNA]</scope>
    <source>
        <strain>KIM10+ / Biovar Mediaevalis</strain>
    </source>
</reference>
<reference key="3">
    <citation type="journal article" date="2004" name="DNA Res.">
        <title>Complete genome sequence of Yersinia pestis strain 91001, an isolate avirulent to humans.</title>
        <authorList>
            <person name="Song Y."/>
            <person name="Tong Z."/>
            <person name="Wang J."/>
            <person name="Wang L."/>
            <person name="Guo Z."/>
            <person name="Han Y."/>
            <person name="Zhang J."/>
            <person name="Pei D."/>
            <person name="Zhou D."/>
            <person name="Qin H."/>
            <person name="Pang X."/>
            <person name="Han Y."/>
            <person name="Zhai J."/>
            <person name="Li M."/>
            <person name="Cui B."/>
            <person name="Qi Z."/>
            <person name="Jin L."/>
            <person name="Dai R."/>
            <person name="Chen F."/>
            <person name="Li S."/>
            <person name="Ye C."/>
            <person name="Du Z."/>
            <person name="Lin W."/>
            <person name="Wang J."/>
            <person name="Yu J."/>
            <person name="Yang H."/>
            <person name="Wang J."/>
            <person name="Huang P."/>
            <person name="Yang R."/>
        </authorList>
    </citation>
    <scope>NUCLEOTIDE SEQUENCE [LARGE SCALE GENOMIC DNA]</scope>
    <source>
        <strain>91001 / Biovar Mediaevalis</strain>
    </source>
</reference>
<dbReference type="EMBL" id="AL590842">
    <property type="protein sequence ID" value="CAL22124.1"/>
    <property type="molecule type" value="Genomic_DNA"/>
</dbReference>
<dbReference type="EMBL" id="AE009952">
    <property type="protein sequence ID" value="AAM84235.1"/>
    <property type="molecule type" value="Genomic_DNA"/>
</dbReference>
<dbReference type="EMBL" id="AE017042">
    <property type="protein sequence ID" value="AAS60815.1"/>
    <property type="molecule type" value="Genomic_DNA"/>
</dbReference>
<dbReference type="PIR" id="AI0429">
    <property type="entry name" value="AI0429"/>
</dbReference>
<dbReference type="RefSeq" id="WP_002210156.1">
    <property type="nucleotide sequence ID" value="NZ_WUCM01000155.1"/>
</dbReference>
<dbReference type="RefSeq" id="YP_002348425.1">
    <property type="nucleotide sequence ID" value="NC_003143.1"/>
</dbReference>
<dbReference type="SMR" id="Q8ZB84"/>
<dbReference type="STRING" id="214092.YPO3536"/>
<dbReference type="PaxDb" id="214092-YPO3536"/>
<dbReference type="DNASU" id="1145594"/>
<dbReference type="EnsemblBacteria" id="AAS60815">
    <property type="protein sequence ID" value="AAS60815"/>
    <property type="gene ID" value="YP_0545"/>
</dbReference>
<dbReference type="GeneID" id="57975178"/>
<dbReference type="KEGG" id="ype:YPO3536"/>
<dbReference type="KEGG" id="ypk:y0647"/>
<dbReference type="KEGG" id="ypm:YP_0545"/>
<dbReference type="PATRIC" id="fig|214092.21.peg.4031"/>
<dbReference type="eggNOG" id="COG0359">
    <property type="taxonomic scope" value="Bacteria"/>
</dbReference>
<dbReference type="HOGENOM" id="CLU_078938_4_1_6"/>
<dbReference type="OMA" id="FAIRWTK"/>
<dbReference type="OrthoDB" id="9788336at2"/>
<dbReference type="Proteomes" id="UP000000815">
    <property type="component" value="Chromosome"/>
</dbReference>
<dbReference type="Proteomes" id="UP000001019">
    <property type="component" value="Chromosome"/>
</dbReference>
<dbReference type="Proteomes" id="UP000002490">
    <property type="component" value="Chromosome"/>
</dbReference>
<dbReference type="GO" id="GO:0022625">
    <property type="term" value="C:cytosolic large ribosomal subunit"/>
    <property type="evidence" value="ECO:0000318"/>
    <property type="project" value="GO_Central"/>
</dbReference>
<dbReference type="GO" id="GO:0019843">
    <property type="term" value="F:rRNA binding"/>
    <property type="evidence" value="ECO:0007669"/>
    <property type="project" value="UniProtKB-UniRule"/>
</dbReference>
<dbReference type="GO" id="GO:0003735">
    <property type="term" value="F:structural constituent of ribosome"/>
    <property type="evidence" value="ECO:0007669"/>
    <property type="project" value="InterPro"/>
</dbReference>
<dbReference type="GO" id="GO:0006412">
    <property type="term" value="P:translation"/>
    <property type="evidence" value="ECO:0007669"/>
    <property type="project" value="UniProtKB-UniRule"/>
</dbReference>
<dbReference type="FunFam" id="3.10.430.100:FF:000001">
    <property type="entry name" value="50S ribosomal protein L9"/>
    <property type="match status" value="1"/>
</dbReference>
<dbReference type="FunFam" id="3.40.5.10:FF:000001">
    <property type="entry name" value="50S ribosomal protein L9"/>
    <property type="match status" value="1"/>
</dbReference>
<dbReference type="Gene3D" id="3.10.430.100">
    <property type="entry name" value="Ribosomal protein L9, C-terminal domain"/>
    <property type="match status" value="1"/>
</dbReference>
<dbReference type="Gene3D" id="3.40.5.10">
    <property type="entry name" value="Ribosomal protein L9, N-terminal domain"/>
    <property type="match status" value="1"/>
</dbReference>
<dbReference type="HAMAP" id="MF_00503">
    <property type="entry name" value="Ribosomal_bL9"/>
    <property type="match status" value="1"/>
</dbReference>
<dbReference type="InterPro" id="IPR000244">
    <property type="entry name" value="Ribosomal_bL9"/>
</dbReference>
<dbReference type="InterPro" id="IPR009027">
    <property type="entry name" value="Ribosomal_bL9/RNase_H1_N"/>
</dbReference>
<dbReference type="InterPro" id="IPR020594">
    <property type="entry name" value="Ribosomal_bL9_bac/chp"/>
</dbReference>
<dbReference type="InterPro" id="IPR020069">
    <property type="entry name" value="Ribosomal_bL9_C"/>
</dbReference>
<dbReference type="InterPro" id="IPR036791">
    <property type="entry name" value="Ribosomal_bL9_C_sf"/>
</dbReference>
<dbReference type="InterPro" id="IPR020070">
    <property type="entry name" value="Ribosomal_bL9_N"/>
</dbReference>
<dbReference type="InterPro" id="IPR036935">
    <property type="entry name" value="Ribosomal_bL9_N_sf"/>
</dbReference>
<dbReference type="NCBIfam" id="TIGR00158">
    <property type="entry name" value="L9"/>
    <property type="match status" value="1"/>
</dbReference>
<dbReference type="PANTHER" id="PTHR21368">
    <property type="entry name" value="50S RIBOSOMAL PROTEIN L9"/>
    <property type="match status" value="1"/>
</dbReference>
<dbReference type="Pfam" id="PF03948">
    <property type="entry name" value="Ribosomal_L9_C"/>
    <property type="match status" value="1"/>
</dbReference>
<dbReference type="Pfam" id="PF01281">
    <property type="entry name" value="Ribosomal_L9_N"/>
    <property type="match status" value="1"/>
</dbReference>
<dbReference type="SUPFAM" id="SSF55658">
    <property type="entry name" value="L9 N-domain-like"/>
    <property type="match status" value="1"/>
</dbReference>
<dbReference type="SUPFAM" id="SSF55653">
    <property type="entry name" value="Ribosomal protein L9 C-domain"/>
    <property type="match status" value="1"/>
</dbReference>
<dbReference type="PROSITE" id="PS00651">
    <property type="entry name" value="RIBOSOMAL_L9"/>
    <property type="match status" value="1"/>
</dbReference>
<accession>Q8ZB84</accession>
<accession>Q0WBB3</accession>
<sequence>MQVILLDKVANLGSLGDQVNVKAGYARNFLVPQGKAVPATKKNVEFFEARRAELEAKLADVLAAAEARATKINELVSVTISSKAGDEGKLFGSIGTRDIADAVTAAGVEVAKSEVRLPNGVLRTAGEHEVHFQVHSDVFAKLNVVVVPEA</sequence>
<protein>
    <recommendedName>
        <fullName evidence="1">Large ribosomal subunit protein bL9</fullName>
    </recommendedName>
    <alternativeName>
        <fullName evidence="2">50S ribosomal protein L9</fullName>
    </alternativeName>
</protein>
<evidence type="ECO:0000255" key="1">
    <source>
        <dbReference type="HAMAP-Rule" id="MF_00503"/>
    </source>
</evidence>
<evidence type="ECO:0000305" key="2"/>
<organism>
    <name type="scientific">Yersinia pestis</name>
    <dbReference type="NCBI Taxonomy" id="632"/>
    <lineage>
        <taxon>Bacteria</taxon>
        <taxon>Pseudomonadati</taxon>
        <taxon>Pseudomonadota</taxon>
        <taxon>Gammaproteobacteria</taxon>
        <taxon>Enterobacterales</taxon>
        <taxon>Yersiniaceae</taxon>
        <taxon>Yersinia</taxon>
    </lineage>
</organism>
<proteinExistence type="inferred from homology"/>
<feature type="chain" id="PRO_0000176710" description="Large ribosomal subunit protein bL9">
    <location>
        <begin position="1"/>
        <end position="150"/>
    </location>
</feature>